<comment type="function">
    <text evidence="1 2 3 4">Part of ribonuclease P, a protein complex that generates mature tRNA molecules by cleaving their 5'-ends.</text>
</comment>
<comment type="catalytic activity">
    <reaction evidence="1">
        <text>Endonucleolytic cleavage of RNA, removing 5'-extranucleotides from tRNA precursor.</text>
        <dbReference type="EC" id="3.1.26.5"/>
    </reaction>
</comment>
<comment type="cofactor">
    <cofactor evidence="1">
        <name>Zn(2+)</name>
        <dbReference type="ChEBI" id="CHEBI:29105"/>
    </cofactor>
    <text evidence="1">Binds 1 zinc ion per subunit.</text>
</comment>
<comment type="subunit">
    <text evidence="2 3 4">Consists of a catalytic RNA component and at least 4 protein subunits. Forms a subcomplex with Rnp1 which stimulates the catalytic RNA.</text>
</comment>
<comment type="subcellular location">
    <subcellularLocation>
        <location evidence="1">Cytoplasm</location>
    </subcellularLocation>
</comment>
<comment type="similarity">
    <text evidence="1">Belongs to the eukaryotic/archaeal RNase P protein component 4 family.</text>
</comment>
<name>RNP4_METJA</name>
<evidence type="ECO:0000255" key="1">
    <source>
        <dbReference type="HAMAP-Rule" id="MF_00757"/>
    </source>
</evidence>
<evidence type="ECO:0000269" key="2">
    <source>
    </source>
</evidence>
<evidence type="ECO:0000269" key="3">
    <source>
    </source>
</evidence>
<evidence type="ECO:0000269" key="4">
    <source>
    </source>
</evidence>
<sequence length="128" mass="15567">MKKFLEKKLKKIAYERIDILMSLAEEEAKKGNWDRAKRYVYLARRIAMKMRIRFPKKWKRRICKKCGTFLLYGRNARVRIKSKRYPHVVITCLECGAIYRIPMIREKKEKRRKKLEERLKAKSNSQTS</sequence>
<reference key="1">
    <citation type="journal article" date="1996" name="Science">
        <title>Complete genome sequence of the methanogenic archaeon, Methanococcus jannaschii.</title>
        <authorList>
            <person name="Bult C.J."/>
            <person name="White O."/>
            <person name="Olsen G.J."/>
            <person name="Zhou L."/>
            <person name="Fleischmann R.D."/>
            <person name="Sutton G.G."/>
            <person name="Blake J.A."/>
            <person name="FitzGerald L.M."/>
            <person name="Clayton R.A."/>
            <person name="Gocayne J.D."/>
            <person name="Kerlavage A.R."/>
            <person name="Dougherty B.A."/>
            <person name="Tomb J.-F."/>
            <person name="Adams M.D."/>
            <person name="Reich C.I."/>
            <person name="Overbeek R."/>
            <person name="Kirkness E.F."/>
            <person name="Weinstock K.G."/>
            <person name="Merrick J.M."/>
            <person name="Glodek A."/>
            <person name="Scott J.L."/>
            <person name="Geoghagen N.S.M."/>
            <person name="Weidman J.F."/>
            <person name="Fuhrmann J.L."/>
            <person name="Nguyen D."/>
            <person name="Utterback T.R."/>
            <person name="Kelley J.M."/>
            <person name="Peterson J.D."/>
            <person name="Sadow P.W."/>
            <person name="Hanna M.C."/>
            <person name="Cotton M.D."/>
            <person name="Roberts K.M."/>
            <person name="Hurst M.A."/>
            <person name="Kaine B.P."/>
            <person name="Borodovsky M."/>
            <person name="Klenk H.-P."/>
            <person name="Fraser C.M."/>
            <person name="Smith H.O."/>
            <person name="Woese C.R."/>
            <person name="Venter J.C."/>
        </authorList>
    </citation>
    <scope>NUCLEOTIDE SEQUENCE [LARGE SCALE GENOMIC DNA]</scope>
    <source>
        <strain>ATCC 43067 / DSM 2661 / JAL-1 / JCM 10045 / NBRC 100440</strain>
    </source>
</reference>
<reference key="2">
    <citation type="journal article" date="2008" name="Nucleic Acids Res.">
        <title>Studies on Methanocaldococcus jannaschii RNase P reveal insights into the roles of RNA and protein cofactors in RNase P catalysis.</title>
        <authorList>
            <person name="Pulukkunat D.K."/>
            <person name="Gopalan V."/>
        </authorList>
    </citation>
    <scope>FUNCTION</scope>
    <scope>INTERACTION WITH RNP1</scope>
    <scope>SUBUNIT</scope>
    <source>
        <strain>ATCC 43067 / DSM 2661 / JAL-1 / JCM 10045 / NBRC 100440</strain>
    </source>
</reference>
<reference key="3">
    <citation type="journal article" date="2011" name="J. Mol. Biol.">
        <title>Cooperative RNP assembly: complementary rescue of structural defects by protein and RNA subunits of archaeal RNase P.</title>
        <authorList>
            <person name="Chen W.Y."/>
            <person name="Xu Y."/>
            <person name="Cho I.M."/>
            <person name="Oruganti S.V."/>
            <person name="Foster M.P."/>
            <person name="Gopalan V."/>
        </authorList>
    </citation>
    <scope>FUNCTION</scope>
    <scope>INTERACTION WITH RNP1</scope>
    <scope>SUBUNIT</scope>
    <source>
        <strain>ATCC 43067 / DSM 2661 / JAL-1 / JCM 10045 / NBRC 100440</strain>
    </source>
</reference>
<reference key="4">
    <citation type="journal article" date="2012" name="Nucleic Acids Res.">
        <title>Fidelity of tRNA 5'-maturation: a possible basis for the functional dependence of archaeal and eukaryal RNase P on multiple protein cofactors.</title>
        <authorList>
            <person name="Chen W.Y."/>
            <person name="Singh D."/>
            <person name="Lai L.B."/>
            <person name="Stiffler M.A."/>
            <person name="Lai H.D."/>
            <person name="Foster M.P."/>
            <person name="Gopalan V."/>
        </authorList>
    </citation>
    <scope>FUNCTION</scope>
    <scope>INTERACTION WITH RNP1</scope>
    <scope>SUBUNIT</scope>
</reference>
<dbReference type="EC" id="3.1.26.5" evidence="1"/>
<dbReference type="EMBL" id="L77117">
    <property type="protein sequence ID" value="AAB98964.1"/>
    <property type="molecule type" value="Genomic_DNA"/>
</dbReference>
<dbReference type="PIR" id="B64420">
    <property type="entry name" value="B64420"/>
</dbReference>
<dbReference type="RefSeq" id="WP_010870476.1">
    <property type="nucleotide sequence ID" value="NC_000909.1"/>
</dbReference>
<dbReference type="PDB" id="6K0A">
    <property type="method" value="EM"/>
    <property type="resolution" value="4.60 A"/>
    <property type="chains" value="G/H=1-128"/>
</dbReference>
<dbReference type="PDB" id="6K0B">
    <property type="method" value="EM"/>
    <property type="resolution" value="4.30 A"/>
    <property type="chains" value="G/H=1-128"/>
</dbReference>
<dbReference type="PDBsum" id="6K0A"/>
<dbReference type="PDBsum" id="6K0B"/>
<dbReference type="EMDB" id="EMD-9900"/>
<dbReference type="SMR" id="Q58372"/>
<dbReference type="STRING" id="243232.MJ_0962"/>
<dbReference type="PaxDb" id="243232-MJ_0962"/>
<dbReference type="EnsemblBacteria" id="AAB98964">
    <property type="protein sequence ID" value="AAB98964"/>
    <property type="gene ID" value="MJ_0962"/>
</dbReference>
<dbReference type="GeneID" id="1451860"/>
<dbReference type="KEGG" id="mja:MJ_0962"/>
<dbReference type="eggNOG" id="arCOG04345">
    <property type="taxonomic scope" value="Archaea"/>
</dbReference>
<dbReference type="HOGENOM" id="CLU_079140_3_1_2"/>
<dbReference type="InParanoid" id="Q58372"/>
<dbReference type="OrthoDB" id="10058at2157"/>
<dbReference type="PhylomeDB" id="Q58372"/>
<dbReference type="Proteomes" id="UP000000805">
    <property type="component" value="Chromosome"/>
</dbReference>
<dbReference type="GO" id="GO:0005737">
    <property type="term" value="C:cytoplasm"/>
    <property type="evidence" value="ECO:0007669"/>
    <property type="project" value="UniProtKB-SubCell"/>
</dbReference>
<dbReference type="GO" id="GO:0030677">
    <property type="term" value="C:ribonuclease P complex"/>
    <property type="evidence" value="ECO:0007669"/>
    <property type="project" value="UniProtKB-UniRule"/>
</dbReference>
<dbReference type="GO" id="GO:0004526">
    <property type="term" value="F:ribonuclease P activity"/>
    <property type="evidence" value="ECO:0007669"/>
    <property type="project" value="UniProtKB-UniRule"/>
</dbReference>
<dbReference type="GO" id="GO:0008270">
    <property type="term" value="F:zinc ion binding"/>
    <property type="evidence" value="ECO:0007669"/>
    <property type="project" value="UniProtKB-UniRule"/>
</dbReference>
<dbReference type="GO" id="GO:0001682">
    <property type="term" value="P:tRNA 5'-leader removal"/>
    <property type="evidence" value="ECO:0007669"/>
    <property type="project" value="UniProtKB-UniRule"/>
</dbReference>
<dbReference type="FunFam" id="1.20.5.420:FF:000018">
    <property type="entry name" value="Ribonuclease P protein component 4"/>
    <property type="match status" value="1"/>
</dbReference>
<dbReference type="Gene3D" id="6.20.50.20">
    <property type="match status" value="1"/>
</dbReference>
<dbReference type="Gene3D" id="1.20.5.420">
    <property type="entry name" value="Immunoglobulin FC, subunit C"/>
    <property type="match status" value="1"/>
</dbReference>
<dbReference type="HAMAP" id="MF_00757">
    <property type="entry name" value="RNase_P_4"/>
    <property type="match status" value="1"/>
</dbReference>
<dbReference type="InterPro" id="IPR016432">
    <property type="entry name" value="RNP4"/>
</dbReference>
<dbReference type="InterPro" id="IPR007175">
    <property type="entry name" value="Rpr2/Snm1/Rpp21"/>
</dbReference>
<dbReference type="PANTHER" id="PTHR14742:SF0">
    <property type="entry name" value="RIBONUCLEASE P PROTEIN SUBUNIT P21"/>
    <property type="match status" value="1"/>
</dbReference>
<dbReference type="PANTHER" id="PTHR14742">
    <property type="entry name" value="RIBONUCLEASE P SUBUNIT P21"/>
    <property type="match status" value="1"/>
</dbReference>
<dbReference type="Pfam" id="PF04032">
    <property type="entry name" value="Rpr2"/>
    <property type="match status" value="1"/>
</dbReference>
<dbReference type="PIRSF" id="PIRSF004878">
    <property type="entry name" value="RNase_P_4"/>
    <property type="match status" value="1"/>
</dbReference>
<accession>Q58372</accession>
<protein>
    <recommendedName>
        <fullName evidence="1">Ribonuclease P protein component 4</fullName>
        <shortName evidence="1">RNase P component 4</shortName>
        <ecNumber evidence="1">3.1.26.5</ecNumber>
    </recommendedName>
    <alternativeName>
        <fullName evidence="1">Rpp21</fullName>
    </alternativeName>
</protein>
<keyword id="KW-0002">3D-structure</keyword>
<keyword id="KW-0963">Cytoplasm</keyword>
<keyword id="KW-0255">Endonuclease</keyword>
<keyword id="KW-0378">Hydrolase</keyword>
<keyword id="KW-0479">Metal-binding</keyword>
<keyword id="KW-0540">Nuclease</keyword>
<keyword id="KW-1185">Reference proteome</keyword>
<keyword id="KW-0819">tRNA processing</keyword>
<keyword id="KW-0862">Zinc</keyword>
<gene>
    <name evidence="1" type="primary">rnp4</name>
    <name type="ordered locus">MJ0962</name>
</gene>
<proteinExistence type="evidence at protein level"/>
<feature type="chain" id="PRO_0000153852" description="Ribonuclease P protein component 4">
    <location>
        <begin position="1"/>
        <end position="128"/>
    </location>
</feature>
<feature type="binding site" evidence="1">
    <location>
        <position position="63"/>
    </location>
    <ligand>
        <name>Zn(2+)</name>
        <dbReference type="ChEBI" id="CHEBI:29105"/>
    </ligand>
</feature>
<feature type="binding site" evidence="1">
    <location>
        <position position="66"/>
    </location>
    <ligand>
        <name>Zn(2+)</name>
        <dbReference type="ChEBI" id="CHEBI:29105"/>
    </ligand>
</feature>
<feature type="binding site" evidence="1">
    <location>
        <position position="92"/>
    </location>
    <ligand>
        <name>Zn(2+)</name>
        <dbReference type="ChEBI" id="CHEBI:29105"/>
    </ligand>
</feature>
<feature type="binding site" evidence="1">
    <location>
        <position position="95"/>
    </location>
    <ligand>
        <name>Zn(2+)</name>
        <dbReference type="ChEBI" id="CHEBI:29105"/>
    </ligand>
</feature>
<organism>
    <name type="scientific">Methanocaldococcus jannaschii (strain ATCC 43067 / DSM 2661 / JAL-1 / JCM 10045 / NBRC 100440)</name>
    <name type="common">Methanococcus jannaschii</name>
    <dbReference type="NCBI Taxonomy" id="243232"/>
    <lineage>
        <taxon>Archaea</taxon>
        <taxon>Methanobacteriati</taxon>
        <taxon>Methanobacteriota</taxon>
        <taxon>Methanomada group</taxon>
        <taxon>Methanococci</taxon>
        <taxon>Methanococcales</taxon>
        <taxon>Methanocaldococcaceae</taxon>
        <taxon>Methanocaldococcus</taxon>
    </lineage>
</organism>